<keyword id="KW-0963">Cytoplasm</keyword>
<keyword id="KW-0342">GTP-binding</keyword>
<keyword id="KW-0436">Ligase</keyword>
<keyword id="KW-0460">Magnesium</keyword>
<keyword id="KW-0479">Metal-binding</keyword>
<keyword id="KW-0547">Nucleotide-binding</keyword>
<keyword id="KW-0658">Purine biosynthesis</keyword>
<keyword id="KW-1185">Reference proteome</keyword>
<protein>
    <recommendedName>
        <fullName evidence="1">Adenylosuccinate synthetase</fullName>
        <shortName evidence="1">AMPSase</shortName>
        <shortName evidence="1">AdSS</shortName>
        <ecNumber evidence="1">6.3.4.4</ecNumber>
    </recommendedName>
    <alternativeName>
        <fullName evidence="1">IMP--aspartate ligase</fullName>
    </alternativeName>
</protein>
<evidence type="ECO:0000255" key="1">
    <source>
        <dbReference type="HAMAP-Rule" id="MF_00011"/>
    </source>
</evidence>
<reference key="1">
    <citation type="journal article" date="2007" name="Nat. Biotechnol.">
        <title>Complete genome sequence of the fish pathogen Flavobacterium psychrophilum.</title>
        <authorList>
            <person name="Duchaud E."/>
            <person name="Boussaha M."/>
            <person name="Loux V."/>
            <person name="Bernardet J.-F."/>
            <person name="Michel C."/>
            <person name="Kerouault B."/>
            <person name="Mondot S."/>
            <person name="Nicolas P."/>
            <person name="Bossy R."/>
            <person name="Caron C."/>
            <person name="Bessieres P."/>
            <person name="Gibrat J.-F."/>
            <person name="Claverol S."/>
            <person name="Dumetz F."/>
            <person name="Le Henaff M."/>
            <person name="Benmansour A."/>
        </authorList>
    </citation>
    <scope>NUCLEOTIDE SEQUENCE [LARGE SCALE GENOMIC DNA]</scope>
    <source>
        <strain>ATCC 49511 / DSM 21280 / CIP 103535 / JIP02/86</strain>
    </source>
</reference>
<organism>
    <name type="scientific">Flavobacterium psychrophilum (strain ATCC 49511 / DSM 21280 / CIP 103535 / JIP02/86)</name>
    <dbReference type="NCBI Taxonomy" id="402612"/>
    <lineage>
        <taxon>Bacteria</taxon>
        <taxon>Pseudomonadati</taxon>
        <taxon>Bacteroidota</taxon>
        <taxon>Flavobacteriia</taxon>
        <taxon>Flavobacteriales</taxon>
        <taxon>Flavobacteriaceae</taxon>
        <taxon>Flavobacterium</taxon>
    </lineage>
</organism>
<dbReference type="EC" id="6.3.4.4" evidence="1"/>
<dbReference type="EMBL" id="AM398681">
    <property type="protein sequence ID" value="CAL43968.1"/>
    <property type="molecule type" value="Genomic_DNA"/>
</dbReference>
<dbReference type="RefSeq" id="WP_011964006.1">
    <property type="nucleotide sequence ID" value="NC_009613.3"/>
</dbReference>
<dbReference type="RefSeq" id="YP_001296770.1">
    <property type="nucleotide sequence ID" value="NC_009613.3"/>
</dbReference>
<dbReference type="SMR" id="A6H0U4"/>
<dbReference type="STRING" id="402612.FP1902"/>
<dbReference type="EnsemblBacteria" id="CAL43968">
    <property type="protein sequence ID" value="CAL43968"/>
    <property type="gene ID" value="FP1902"/>
</dbReference>
<dbReference type="KEGG" id="fps:FP1902"/>
<dbReference type="PATRIC" id="fig|402612.5.peg.1928"/>
<dbReference type="eggNOG" id="COG0104">
    <property type="taxonomic scope" value="Bacteria"/>
</dbReference>
<dbReference type="HOGENOM" id="CLU_029848_0_0_10"/>
<dbReference type="OrthoDB" id="9807553at2"/>
<dbReference type="UniPathway" id="UPA00075">
    <property type="reaction ID" value="UER00335"/>
</dbReference>
<dbReference type="Proteomes" id="UP000006394">
    <property type="component" value="Chromosome"/>
</dbReference>
<dbReference type="GO" id="GO:0005737">
    <property type="term" value="C:cytoplasm"/>
    <property type="evidence" value="ECO:0007669"/>
    <property type="project" value="UniProtKB-SubCell"/>
</dbReference>
<dbReference type="GO" id="GO:0004019">
    <property type="term" value="F:adenylosuccinate synthase activity"/>
    <property type="evidence" value="ECO:0007669"/>
    <property type="project" value="UniProtKB-UniRule"/>
</dbReference>
<dbReference type="GO" id="GO:0005525">
    <property type="term" value="F:GTP binding"/>
    <property type="evidence" value="ECO:0007669"/>
    <property type="project" value="UniProtKB-UniRule"/>
</dbReference>
<dbReference type="GO" id="GO:0000287">
    <property type="term" value="F:magnesium ion binding"/>
    <property type="evidence" value="ECO:0007669"/>
    <property type="project" value="UniProtKB-UniRule"/>
</dbReference>
<dbReference type="GO" id="GO:0044208">
    <property type="term" value="P:'de novo' AMP biosynthetic process"/>
    <property type="evidence" value="ECO:0007669"/>
    <property type="project" value="UniProtKB-UniRule"/>
</dbReference>
<dbReference type="GO" id="GO:0046040">
    <property type="term" value="P:IMP metabolic process"/>
    <property type="evidence" value="ECO:0007669"/>
    <property type="project" value="TreeGrafter"/>
</dbReference>
<dbReference type="CDD" id="cd03108">
    <property type="entry name" value="AdSS"/>
    <property type="match status" value="1"/>
</dbReference>
<dbReference type="FunFam" id="1.10.300.10:FF:000001">
    <property type="entry name" value="Adenylosuccinate synthetase"/>
    <property type="match status" value="1"/>
</dbReference>
<dbReference type="FunFam" id="3.90.170.10:FF:000001">
    <property type="entry name" value="Adenylosuccinate synthetase"/>
    <property type="match status" value="1"/>
</dbReference>
<dbReference type="Gene3D" id="3.40.440.10">
    <property type="entry name" value="Adenylosuccinate Synthetase, subunit A, domain 1"/>
    <property type="match status" value="1"/>
</dbReference>
<dbReference type="Gene3D" id="1.10.300.10">
    <property type="entry name" value="Adenylosuccinate Synthetase, subunit A, domain 2"/>
    <property type="match status" value="1"/>
</dbReference>
<dbReference type="Gene3D" id="3.90.170.10">
    <property type="entry name" value="Adenylosuccinate Synthetase, subunit A, domain 3"/>
    <property type="match status" value="1"/>
</dbReference>
<dbReference type="HAMAP" id="MF_00011">
    <property type="entry name" value="Adenylosucc_synth"/>
    <property type="match status" value="1"/>
</dbReference>
<dbReference type="InterPro" id="IPR018220">
    <property type="entry name" value="Adenylosuccin_syn_GTP-bd"/>
</dbReference>
<dbReference type="InterPro" id="IPR033128">
    <property type="entry name" value="Adenylosuccin_syn_Lys_AS"/>
</dbReference>
<dbReference type="InterPro" id="IPR042109">
    <property type="entry name" value="Adenylosuccinate_synth_dom1"/>
</dbReference>
<dbReference type="InterPro" id="IPR042110">
    <property type="entry name" value="Adenylosuccinate_synth_dom2"/>
</dbReference>
<dbReference type="InterPro" id="IPR042111">
    <property type="entry name" value="Adenylosuccinate_synth_dom3"/>
</dbReference>
<dbReference type="InterPro" id="IPR001114">
    <property type="entry name" value="Adenylosuccinate_synthetase"/>
</dbReference>
<dbReference type="InterPro" id="IPR027417">
    <property type="entry name" value="P-loop_NTPase"/>
</dbReference>
<dbReference type="NCBIfam" id="NF002223">
    <property type="entry name" value="PRK01117.1"/>
    <property type="match status" value="1"/>
</dbReference>
<dbReference type="NCBIfam" id="TIGR00184">
    <property type="entry name" value="purA"/>
    <property type="match status" value="1"/>
</dbReference>
<dbReference type="PANTHER" id="PTHR11846">
    <property type="entry name" value="ADENYLOSUCCINATE SYNTHETASE"/>
    <property type="match status" value="1"/>
</dbReference>
<dbReference type="PANTHER" id="PTHR11846:SF0">
    <property type="entry name" value="ADENYLOSUCCINATE SYNTHETASE"/>
    <property type="match status" value="1"/>
</dbReference>
<dbReference type="Pfam" id="PF00709">
    <property type="entry name" value="Adenylsucc_synt"/>
    <property type="match status" value="1"/>
</dbReference>
<dbReference type="SMART" id="SM00788">
    <property type="entry name" value="Adenylsucc_synt"/>
    <property type="match status" value="1"/>
</dbReference>
<dbReference type="SUPFAM" id="SSF52540">
    <property type="entry name" value="P-loop containing nucleoside triphosphate hydrolases"/>
    <property type="match status" value="1"/>
</dbReference>
<dbReference type="PROSITE" id="PS01266">
    <property type="entry name" value="ADENYLOSUCCIN_SYN_1"/>
    <property type="match status" value="1"/>
</dbReference>
<dbReference type="PROSITE" id="PS00513">
    <property type="entry name" value="ADENYLOSUCCIN_SYN_2"/>
    <property type="match status" value="1"/>
</dbReference>
<sequence length="423" mass="46829">MTVDLLLGLQWGDEGKGKIVDVLTSKYDIIARFQGGPNAGHTLEFDGIKHVLRTIPSGIFHKNNINIIGNGVVIDPVVFKTEVDGLAKFNLDLKSKLIISRKAHLILPTHRLLDAASEASKGKAKIGSTLKGIGPTYMDKTGRNGIRVGDIELVDFKEKYRALANKHEEMIKFYDVSIQYNLAELEKEFFEAIEDLKKLDFIDSEEYLHQAQKAGKSILCEGAQGSLLDVDFGTYPFVTSSNTTAAGACTGLGIAPNKIKEVYGIFKAYTTRVGSGPFPTEDFEDAGTTMAKVGNEFGSVTGRQRRCGWLDLVALKYAVQINGVTQLMMMKGDVLSGFETLKVCTSYKYKGQEIAHLPYNIEPENIEPVYTEFKGWKADLTGMSSYDELPKELKDYIDFIEKEVEVPIKIVSVGPDRKQTITK</sequence>
<accession>A6H0U4</accession>
<gene>
    <name evidence="1" type="primary">purA</name>
    <name type="ordered locus">FP1902</name>
</gene>
<feature type="chain" id="PRO_1000000819" description="Adenylosuccinate synthetase">
    <location>
        <begin position="1"/>
        <end position="423"/>
    </location>
</feature>
<feature type="active site" description="Proton acceptor" evidence="1">
    <location>
        <position position="13"/>
    </location>
</feature>
<feature type="active site" description="Proton donor" evidence="1">
    <location>
        <position position="41"/>
    </location>
</feature>
<feature type="binding site" evidence="1">
    <location>
        <begin position="12"/>
        <end position="18"/>
    </location>
    <ligand>
        <name>GTP</name>
        <dbReference type="ChEBI" id="CHEBI:37565"/>
    </ligand>
</feature>
<feature type="binding site" description="in other chain" evidence="1">
    <location>
        <begin position="13"/>
        <end position="16"/>
    </location>
    <ligand>
        <name>IMP</name>
        <dbReference type="ChEBI" id="CHEBI:58053"/>
        <note>ligand shared between dimeric partners</note>
    </ligand>
</feature>
<feature type="binding site" evidence="1">
    <location>
        <position position="13"/>
    </location>
    <ligand>
        <name>Mg(2+)</name>
        <dbReference type="ChEBI" id="CHEBI:18420"/>
    </ligand>
</feature>
<feature type="binding site" description="in other chain" evidence="1">
    <location>
        <begin position="38"/>
        <end position="41"/>
    </location>
    <ligand>
        <name>IMP</name>
        <dbReference type="ChEBI" id="CHEBI:58053"/>
        <note>ligand shared between dimeric partners</note>
    </ligand>
</feature>
<feature type="binding site" evidence="1">
    <location>
        <begin position="40"/>
        <end position="42"/>
    </location>
    <ligand>
        <name>GTP</name>
        <dbReference type="ChEBI" id="CHEBI:37565"/>
    </ligand>
</feature>
<feature type="binding site" evidence="1">
    <location>
        <position position="40"/>
    </location>
    <ligand>
        <name>Mg(2+)</name>
        <dbReference type="ChEBI" id="CHEBI:18420"/>
    </ligand>
</feature>
<feature type="binding site" description="in other chain" evidence="1">
    <location>
        <position position="129"/>
    </location>
    <ligand>
        <name>IMP</name>
        <dbReference type="ChEBI" id="CHEBI:58053"/>
        <note>ligand shared between dimeric partners</note>
    </ligand>
</feature>
<feature type="binding site" evidence="1">
    <location>
        <position position="143"/>
    </location>
    <ligand>
        <name>IMP</name>
        <dbReference type="ChEBI" id="CHEBI:58053"/>
        <note>ligand shared between dimeric partners</note>
    </ligand>
</feature>
<feature type="binding site" description="in other chain" evidence="1">
    <location>
        <position position="224"/>
    </location>
    <ligand>
        <name>IMP</name>
        <dbReference type="ChEBI" id="CHEBI:58053"/>
        <note>ligand shared between dimeric partners</note>
    </ligand>
</feature>
<feature type="binding site" description="in other chain" evidence="1">
    <location>
        <position position="239"/>
    </location>
    <ligand>
        <name>IMP</name>
        <dbReference type="ChEBI" id="CHEBI:58053"/>
        <note>ligand shared between dimeric partners</note>
    </ligand>
</feature>
<feature type="binding site" evidence="1">
    <location>
        <begin position="299"/>
        <end position="305"/>
    </location>
    <ligand>
        <name>substrate</name>
    </ligand>
</feature>
<feature type="binding site" description="in other chain" evidence="1">
    <location>
        <position position="303"/>
    </location>
    <ligand>
        <name>IMP</name>
        <dbReference type="ChEBI" id="CHEBI:58053"/>
        <note>ligand shared between dimeric partners</note>
    </ligand>
</feature>
<feature type="binding site" evidence="1">
    <location>
        <position position="305"/>
    </location>
    <ligand>
        <name>GTP</name>
        <dbReference type="ChEBI" id="CHEBI:37565"/>
    </ligand>
</feature>
<feature type="binding site" evidence="1">
    <location>
        <begin position="331"/>
        <end position="333"/>
    </location>
    <ligand>
        <name>GTP</name>
        <dbReference type="ChEBI" id="CHEBI:37565"/>
    </ligand>
</feature>
<feature type="binding site" evidence="1">
    <location>
        <begin position="412"/>
        <end position="414"/>
    </location>
    <ligand>
        <name>GTP</name>
        <dbReference type="ChEBI" id="CHEBI:37565"/>
    </ligand>
</feature>
<proteinExistence type="inferred from homology"/>
<name>PURA_FLAPJ</name>
<comment type="function">
    <text evidence="1">Plays an important role in the de novo pathway of purine nucleotide biosynthesis. Catalyzes the first committed step in the biosynthesis of AMP from IMP.</text>
</comment>
<comment type="catalytic activity">
    <reaction evidence="1">
        <text>IMP + L-aspartate + GTP = N(6)-(1,2-dicarboxyethyl)-AMP + GDP + phosphate + 2 H(+)</text>
        <dbReference type="Rhea" id="RHEA:15753"/>
        <dbReference type="ChEBI" id="CHEBI:15378"/>
        <dbReference type="ChEBI" id="CHEBI:29991"/>
        <dbReference type="ChEBI" id="CHEBI:37565"/>
        <dbReference type="ChEBI" id="CHEBI:43474"/>
        <dbReference type="ChEBI" id="CHEBI:57567"/>
        <dbReference type="ChEBI" id="CHEBI:58053"/>
        <dbReference type="ChEBI" id="CHEBI:58189"/>
        <dbReference type="EC" id="6.3.4.4"/>
    </reaction>
</comment>
<comment type="cofactor">
    <cofactor evidence="1">
        <name>Mg(2+)</name>
        <dbReference type="ChEBI" id="CHEBI:18420"/>
    </cofactor>
    <text evidence="1">Binds 1 Mg(2+) ion per subunit.</text>
</comment>
<comment type="pathway">
    <text evidence="1">Purine metabolism; AMP biosynthesis via de novo pathway; AMP from IMP: step 1/2.</text>
</comment>
<comment type="subunit">
    <text evidence="1">Homodimer.</text>
</comment>
<comment type="subcellular location">
    <subcellularLocation>
        <location evidence="1">Cytoplasm</location>
    </subcellularLocation>
</comment>
<comment type="similarity">
    <text evidence="1">Belongs to the adenylosuccinate synthetase family.</text>
</comment>